<dbReference type="EMBL" id="Y18674">
    <property type="protein sequence ID" value="CAA77256.1"/>
    <property type="molecule type" value="mRNA"/>
</dbReference>
<dbReference type="SMR" id="Q9YGZ3"/>
<dbReference type="GlyCosmos" id="Q9YGZ3">
    <property type="glycosylation" value="3 sites, No reported glycans"/>
</dbReference>
<dbReference type="GO" id="GO:0016020">
    <property type="term" value="C:membrane"/>
    <property type="evidence" value="ECO:0000250"/>
    <property type="project" value="UniProtKB"/>
</dbReference>
<dbReference type="GO" id="GO:0097381">
    <property type="term" value="C:photoreceptor disc membrane"/>
    <property type="evidence" value="ECO:0000250"/>
    <property type="project" value="UniProtKB"/>
</dbReference>
<dbReference type="GO" id="GO:0005886">
    <property type="term" value="C:plasma membrane"/>
    <property type="evidence" value="ECO:0000250"/>
    <property type="project" value="UniProtKB"/>
</dbReference>
<dbReference type="GO" id="GO:0005502">
    <property type="term" value="F:11-cis retinal binding"/>
    <property type="evidence" value="ECO:0000250"/>
    <property type="project" value="UniProtKB"/>
</dbReference>
<dbReference type="GO" id="GO:0008020">
    <property type="term" value="F:G protein-coupled photoreceptor activity"/>
    <property type="evidence" value="ECO:0000250"/>
    <property type="project" value="UniProtKB"/>
</dbReference>
<dbReference type="GO" id="GO:0016038">
    <property type="term" value="P:absorption of visible light"/>
    <property type="evidence" value="ECO:0000250"/>
    <property type="project" value="UniProtKB"/>
</dbReference>
<dbReference type="GO" id="GO:0016056">
    <property type="term" value="P:G protein-coupled opsin signaling pathway"/>
    <property type="evidence" value="ECO:0000250"/>
    <property type="project" value="UniProtKB"/>
</dbReference>
<dbReference type="GO" id="GO:0007601">
    <property type="term" value="P:visual perception"/>
    <property type="evidence" value="ECO:0007669"/>
    <property type="project" value="UniProtKB-KW"/>
</dbReference>
<dbReference type="CDD" id="cd15080">
    <property type="entry name" value="7tmA_MWS_opsin"/>
    <property type="match status" value="1"/>
</dbReference>
<dbReference type="FunFam" id="1.20.1070.10:FF:000018">
    <property type="entry name" value="Rhodopsin"/>
    <property type="match status" value="1"/>
</dbReference>
<dbReference type="Gene3D" id="1.20.1070.10">
    <property type="entry name" value="Rhodopsin 7-helix transmembrane proteins"/>
    <property type="match status" value="1"/>
</dbReference>
<dbReference type="InterPro" id="IPR050125">
    <property type="entry name" value="GPCR_opsins"/>
</dbReference>
<dbReference type="InterPro" id="IPR000276">
    <property type="entry name" value="GPCR_Rhodpsn"/>
</dbReference>
<dbReference type="InterPro" id="IPR017452">
    <property type="entry name" value="GPCR_Rhodpsn_7TM"/>
</dbReference>
<dbReference type="InterPro" id="IPR001760">
    <property type="entry name" value="Opsin"/>
</dbReference>
<dbReference type="InterPro" id="IPR027430">
    <property type="entry name" value="Retinal_BS"/>
</dbReference>
<dbReference type="InterPro" id="IPR000732">
    <property type="entry name" value="Rhodopsin"/>
</dbReference>
<dbReference type="InterPro" id="IPR019477">
    <property type="entry name" value="Rhodopsin_N"/>
</dbReference>
<dbReference type="PANTHER" id="PTHR24240">
    <property type="entry name" value="OPSIN"/>
    <property type="match status" value="1"/>
</dbReference>
<dbReference type="Pfam" id="PF00001">
    <property type="entry name" value="7tm_1"/>
    <property type="match status" value="1"/>
</dbReference>
<dbReference type="Pfam" id="PF10413">
    <property type="entry name" value="Rhodopsin_N"/>
    <property type="match status" value="1"/>
</dbReference>
<dbReference type="PRINTS" id="PR00237">
    <property type="entry name" value="GPCRRHODOPSN"/>
</dbReference>
<dbReference type="PRINTS" id="PR00238">
    <property type="entry name" value="OPSIN"/>
</dbReference>
<dbReference type="PRINTS" id="PR00579">
    <property type="entry name" value="RHODOPSIN"/>
</dbReference>
<dbReference type="SUPFAM" id="SSF81321">
    <property type="entry name" value="Family A G protein-coupled receptor-like"/>
    <property type="match status" value="1"/>
</dbReference>
<dbReference type="PROSITE" id="PS00237">
    <property type="entry name" value="G_PROTEIN_RECEP_F1_1"/>
    <property type="match status" value="1"/>
</dbReference>
<dbReference type="PROSITE" id="PS50262">
    <property type="entry name" value="G_PROTEIN_RECEP_F1_2"/>
    <property type="match status" value="1"/>
</dbReference>
<dbReference type="PROSITE" id="PS00238">
    <property type="entry name" value="OPSIN"/>
    <property type="match status" value="1"/>
</dbReference>
<keyword id="KW-0966">Cell projection</keyword>
<keyword id="KW-0157">Chromophore</keyword>
<keyword id="KW-1015">Disulfide bond</keyword>
<keyword id="KW-0297">G-protein coupled receptor</keyword>
<keyword id="KW-0325">Glycoprotein</keyword>
<keyword id="KW-0449">Lipoprotein</keyword>
<keyword id="KW-0472">Membrane</keyword>
<keyword id="KW-0564">Palmitate</keyword>
<keyword id="KW-0597">Phosphoprotein</keyword>
<keyword id="KW-0600">Photoreceptor protein</keyword>
<keyword id="KW-0675">Receptor</keyword>
<keyword id="KW-0681">Retinal protein</keyword>
<keyword id="KW-0716">Sensory transduction</keyword>
<keyword id="KW-0807">Transducer</keyword>
<keyword id="KW-0812">Transmembrane</keyword>
<keyword id="KW-1133">Transmembrane helix</keyword>
<keyword id="KW-0844">Vision</keyword>
<gene>
    <name type="primary">rho</name>
</gene>
<organism>
    <name type="scientific">Salaria pavo</name>
    <name type="common">Peacock blenny</name>
    <name type="synonym">Lipophrys pavo</name>
    <dbReference type="NCBI Taxonomy" id="152553"/>
    <lineage>
        <taxon>Eukaryota</taxon>
        <taxon>Metazoa</taxon>
        <taxon>Chordata</taxon>
        <taxon>Craniata</taxon>
        <taxon>Vertebrata</taxon>
        <taxon>Euteleostomi</taxon>
        <taxon>Actinopterygii</taxon>
        <taxon>Neopterygii</taxon>
        <taxon>Teleostei</taxon>
        <taxon>Neoteleostei</taxon>
        <taxon>Acanthomorphata</taxon>
        <taxon>Ovalentaria</taxon>
        <taxon>Blenniimorphae</taxon>
        <taxon>Blenniiformes</taxon>
        <taxon>Blennioidei</taxon>
        <taxon>Blenniidae</taxon>
        <taxon>Salariinae</taxon>
        <taxon>Salaria</taxon>
    </lineage>
</organism>
<protein>
    <recommendedName>
        <fullName>Rhodopsin</fullName>
    </recommendedName>
</protein>
<evidence type="ECO:0000250" key="1">
    <source>
        <dbReference type="UniProtKB" id="P02699"/>
    </source>
</evidence>
<evidence type="ECO:0000250" key="2">
    <source>
        <dbReference type="UniProtKB" id="P08100"/>
    </source>
</evidence>
<evidence type="ECO:0000250" key="3">
    <source>
        <dbReference type="UniProtKB" id="P32309"/>
    </source>
</evidence>
<evidence type="ECO:0000250" key="4">
    <source>
        <dbReference type="UniProtKB" id="P35359"/>
    </source>
</evidence>
<evidence type="ECO:0000255" key="5"/>
<evidence type="ECO:0000255" key="6">
    <source>
        <dbReference type="PROSITE-ProRule" id="PRU00521"/>
    </source>
</evidence>
<evidence type="ECO:0000256" key="7">
    <source>
        <dbReference type="SAM" id="MobiDB-lite"/>
    </source>
</evidence>
<evidence type="ECO:0000305" key="8"/>
<feature type="chain" id="PRO_0000197709" description="Rhodopsin">
    <location>
        <begin position="1"/>
        <end position="354"/>
    </location>
</feature>
<feature type="topological domain" description="Extracellular" evidence="8">
    <location>
        <begin position="1"/>
        <end position="36"/>
    </location>
</feature>
<feature type="transmembrane region" description="Helical; Name=1" evidence="1">
    <location>
        <begin position="37"/>
        <end position="61"/>
    </location>
</feature>
<feature type="topological domain" description="Cytoplasmic" evidence="8">
    <location>
        <begin position="62"/>
        <end position="73"/>
    </location>
</feature>
<feature type="transmembrane region" description="Helical; Name=2" evidence="1">
    <location>
        <begin position="74"/>
        <end position="96"/>
    </location>
</feature>
<feature type="topological domain" description="Extracellular" evidence="8">
    <location>
        <begin position="97"/>
        <end position="110"/>
    </location>
</feature>
<feature type="transmembrane region" description="Helical; Name=3" evidence="1">
    <location>
        <begin position="111"/>
        <end position="133"/>
    </location>
</feature>
<feature type="topological domain" description="Cytoplasmic" evidence="8">
    <location>
        <begin position="134"/>
        <end position="152"/>
    </location>
</feature>
<feature type="transmembrane region" description="Helical; Name=4" evidence="1">
    <location>
        <begin position="153"/>
        <end position="173"/>
    </location>
</feature>
<feature type="topological domain" description="Extracellular" evidence="8">
    <location>
        <begin position="174"/>
        <end position="202"/>
    </location>
</feature>
<feature type="transmembrane region" description="Helical; Name=5" evidence="1">
    <location>
        <begin position="203"/>
        <end position="224"/>
    </location>
</feature>
<feature type="topological domain" description="Cytoplasmic" evidence="8">
    <location>
        <begin position="225"/>
        <end position="252"/>
    </location>
</feature>
<feature type="transmembrane region" description="Helical; Name=6" evidence="1">
    <location>
        <begin position="253"/>
        <end position="274"/>
    </location>
</feature>
<feature type="topological domain" description="Extracellular" evidence="8">
    <location>
        <begin position="275"/>
        <end position="286"/>
    </location>
</feature>
<feature type="transmembrane region" description="Helical; Name=7" evidence="1">
    <location>
        <begin position="287"/>
        <end position="308"/>
    </location>
</feature>
<feature type="topological domain" description="Cytoplasmic" evidence="8">
    <location>
        <begin position="309"/>
        <end position="354"/>
    </location>
</feature>
<feature type="region of interest" description="Disordered" evidence="7">
    <location>
        <begin position="333"/>
        <end position="354"/>
    </location>
</feature>
<feature type="short sequence motif" description="'Ionic lock' involved in activated form stabilization" evidence="1">
    <location>
        <begin position="134"/>
        <end position="136"/>
    </location>
</feature>
<feature type="compositionally biased region" description="Low complexity" evidence="7">
    <location>
        <begin position="334"/>
        <end position="354"/>
    </location>
</feature>
<feature type="site" description="Plays an important role in the conformation switch to the active conformation" evidence="1">
    <location>
        <position position="113"/>
    </location>
</feature>
<feature type="modified residue" description="N6-(retinylidene)lysine" evidence="1">
    <location>
        <position position="296"/>
    </location>
</feature>
<feature type="lipid moiety-binding region" description="S-palmitoyl cysteine" evidence="1">
    <location>
        <position position="322"/>
    </location>
</feature>
<feature type="lipid moiety-binding region" description="S-palmitoyl cysteine" evidence="1">
    <location>
        <position position="323"/>
    </location>
</feature>
<feature type="glycosylation site" description="N-linked (GlcNAc...) asparagine" evidence="5">
    <location>
        <position position="2"/>
    </location>
</feature>
<feature type="glycosylation site" description="N-linked (GlcNAc...) asparagine" evidence="5">
    <location>
        <position position="15"/>
    </location>
</feature>
<feature type="glycosylation site" description="N-linked (GlcNAc...) asparagine" evidence="5">
    <location>
        <position position="200"/>
    </location>
</feature>
<feature type="disulfide bond" evidence="6">
    <location>
        <begin position="110"/>
        <end position="187"/>
    </location>
</feature>
<comment type="function">
    <text evidence="1 2 3">Photoreceptor required for image-forming vision at low light intensity. While most salt water fish species use retinal as chromophore, most freshwater fish use 3-dehydroretinal, or a mixture of retinal and 3-dehydroretinal (By similarity). Light-induced isomerization of 11-cis to all-trans retinal triggers a conformational change that activates signaling via G-proteins. Subsequent receptor phosphorylation mediates displacement of the bound G-protein alpha subunit by arrestin and terminates signaling (By similarity).</text>
</comment>
<comment type="subcellular location">
    <subcellularLocation>
        <location evidence="2">Membrane</location>
        <topology evidence="2">Multi-pass membrane protein</topology>
    </subcellularLocation>
    <subcellularLocation>
        <location evidence="4">Cell projection</location>
        <location evidence="4">Cilium</location>
        <location evidence="4">Photoreceptor outer segment</location>
    </subcellularLocation>
    <text evidence="2">Synthesized in the inner segment (IS) of rod photoreceptor cells before vectorial transport to disk membranes in the rod outer segment (OS) photosensory cilia.</text>
</comment>
<comment type="PTM">
    <text evidence="1">Phosphorylated on some or all of the serine and threonine residues present in the C-terminal region.</text>
</comment>
<comment type="PTM">
    <text evidence="1">Contains one covalently linked retinal chromophore.</text>
</comment>
<comment type="similarity">
    <text evidence="6">Belongs to the G-protein coupled receptor 1 family. Opsin subfamily.</text>
</comment>
<proteinExistence type="evidence at transcript level"/>
<sequence>MNGTEGPYFYIPMVNTTGIVRSPYEYPQYYLVNPAAYAALGAYMFFLILLGFPINFLTLYVTLEHKKLRTPLNYILLNLAVADLFMVFGGFTTTMYTSMHGYFVLGRLGCNLEGFFATLGGEIGLWSLVVLAIERWVVVCKPISNFRFGENHAIMGLAFTWIMACACAVPPLVGWSRYIPEGMQCSCGVDYYTRAEGFNNESFVVYMFTCHFCIPLTIIGFCYGRLLCAVKEAAAAQQESETTQRAEREVTRMVILMVVGFLVCWLPYASVAWYIFSNQGSQFGPLFMTIPAFFAKSSSVYNPMIYICMNKQFRHCMITTLCCGKNPFEEEEGASTTASKTEASSVSSSSVSPA</sequence>
<accession>Q9YGZ3</accession>
<reference key="1">
    <citation type="submission" date="1999-01" db="EMBL/GenBank/DDBJ databases">
        <title>Comparative analysis of opsins in Mediterranian coastal fish.</title>
        <authorList>
            <person name="Archer S.N."/>
            <person name="Hirano J."/>
        </authorList>
    </citation>
    <scope>NUCLEOTIDE SEQUENCE [MRNA]</scope>
    <source>
        <tissue>Retina</tissue>
    </source>
</reference>
<name>OPSD_SALPV</name>